<keyword id="KW-0414">Isoprene biosynthesis</keyword>
<keyword id="KW-0456">Lyase</keyword>
<keyword id="KW-0479">Metal-binding</keyword>
<keyword id="KW-1185">Reference proteome</keyword>
<dbReference type="EC" id="4.6.1.12" evidence="1"/>
<dbReference type="EMBL" id="CP000447">
    <property type="protein sequence ID" value="ABI70908.1"/>
    <property type="molecule type" value="Genomic_DNA"/>
</dbReference>
<dbReference type="RefSeq" id="WP_011636529.1">
    <property type="nucleotide sequence ID" value="NC_008345.1"/>
</dbReference>
<dbReference type="SMR" id="Q086A7"/>
<dbReference type="STRING" id="318167.Sfri_1055"/>
<dbReference type="KEGG" id="sfr:Sfri_1055"/>
<dbReference type="eggNOG" id="COG0245">
    <property type="taxonomic scope" value="Bacteria"/>
</dbReference>
<dbReference type="HOGENOM" id="CLU_084630_2_0_6"/>
<dbReference type="OrthoDB" id="9804336at2"/>
<dbReference type="UniPathway" id="UPA00056">
    <property type="reaction ID" value="UER00095"/>
</dbReference>
<dbReference type="Proteomes" id="UP000000684">
    <property type="component" value="Chromosome"/>
</dbReference>
<dbReference type="GO" id="GO:0008685">
    <property type="term" value="F:2-C-methyl-D-erythritol 2,4-cyclodiphosphate synthase activity"/>
    <property type="evidence" value="ECO:0007669"/>
    <property type="project" value="UniProtKB-UniRule"/>
</dbReference>
<dbReference type="GO" id="GO:0046872">
    <property type="term" value="F:metal ion binding"/>
    <property type="evidence" value="ECO:0007669"/>
    <property type="project" value="UniProtKB-KW"/>
</dbReference>
<dbReference type="GO" id="GO:0019288">
    <property type="term" value="P:isopentenyl diphosphate biosynthetic process, methylerythritol 4-phosphate pathway"/>
    <property type="evidence" value="ECO:0007669"/>
    <property type="project" value="UniProtKB-UniRule"/>
</dbReference>
<dbReference type="GO" id="GO:0016114">
    <property type="term" value="P:terpenoid biosynthetic process"/>
    <property type="evidence" value="ECO:0007669"/>
    <property type="project" value="InterPro"/>
</dbReference>
<dbReference type="CDD" id="cd00554">
    <property type="entry name" value="MECDP_synthase"/>
    <property type="match status" value="1"/>
</dbReference>
<dbReference type="FunFam" id="3.30.1330.50:FF:000001">
    <property type="entry name" value="2-C-methyl-D-erythritol 2,4-cyclodiphosphate synthase"/>
    <property type="match status" value="1"/>
</dbReference>
<dbReference type="Gene3D" id="3.30.1330.50">
    <property type="entry name" value="2-C-methyl-D-erythritol 2,4-cyclodiphosphate synthase"/>
    <property type="match status" value="1"/>
</dbReference>
<dbReference type="HAMAP" id="MF_00107">
    <property type="entry name" value="IspF"/>
    <property type="match status" value="1"/>
</dbReference>
<dbReference type="InterPro" id="IPR003526">
    <property type="entry name" value="MECDP_synthase"/>
</dbReference>
<dbReference type="InterPro" id="IPR020555">
    <property type="entry name" value="MECDP_synthase_CS"/>
</dbReference>
<dbReference type="InterPro" id="IPR036571">
    <property type="entry name" value="MECDP_synthase_sf"/>
</dbReference>
<dbReference type="NCBIfam" id="TIGR00151">
    <property type="entry name" value="ispF"/>
    <property type="match status" value="1"/>
</dbReference>
<dbReference type="PANTHER" id="PTHR43181">
    <property type="entry name" value="2-C-METHYL-D-ERYTHRITOL 2,4-CYCLODIPHOSPHATE SYNTHASE, CHLOROPLASTIC"/>
    <property type="match status" value="1"/>
</dbReference>
<dbReference type="PANTHER" id="PTHR43181:SF1">
    <property type="entry name" value="2-C-METHYL-D-ERYTHRITOL 2,4-CYCLODIPHOSPHATE SYNTHASE, CHLOROPLASTIC"/>
    <property type="match status" value="1"/>
</dbReference>
<dbReference type="Pfam" id="PF02542">
    <property type="entry name" value="YgbB"/>
    <property type="match status" value="1"/>
</dbReference>
<dbReference type="SUPFAM" id="SSF69765">
    <property type="entry name" value="IpsF-like"/>
    <property type="match status" value="1"/>
</dbReference>
<dbReference type="PROSITE" id="PS01350">
    <property type="entry name" value="ISPF"/>
    <property type="match status" value="1"/>
</dbReference>
<organism>
    <name type="scientific">Shewanella frigidimarina (strain NCIMB 400)</name>
    <dbReference type="NCBI Taxonomy" id="318167"/>
    <lineage>
        <taxon>Bacteria</taxon>
        <taxon>Pseudomonadati</taxon>
        <taxon>Pseudomonadota</taxon>
        <taxon>Gammaproteobacteria</taxon>
        <taxon>Alteromonadales</taxon>
        <taxon>Shewanellaceae</taxon>
        <taxon>Shewanella</taxon>
    </lineage>
</organism>
<sequence length="159" mass="16873">MNIRIGHGFDVHKFGGDSPLVLGGVTVPYDSGLIAHSDGDVVLHAISDAILGAMALGDIGKHFPDTDANFAGADSRVLLKHCYQLALQKQFVLGNLDVTIIAQAPKMAPHIEAIRQCLSADLQTDIDNINVKATTTENLGFTGRKEGIAVEAVVLMKSQ</sequence>
<feature type="chain" id="PRO_1000022879" description="2-C-methyl-D-erythritol 2,4-cyclodiphosphate synthase">
    <location>
        <begin position="1"/>
        <end position="159"/>
    </location>
</feature>
<feature type="binding site" evidence="1">
    <location>
        <begin position="10"/>
        <end position="12"/>
    </location>
    <ligand>
        <name>4-CDP-2-C-methyl-D-erythritol 2-phosphate</name>
        <dbReference type="ChEBI" id="CHEBI:57919"/>
    </ligand>
</feature>
<feature type="binding site" evidence="1">
    <location>
        <position position="10"/>
    </location>
    <ligand>
        <name>a divalent metal cation</name>
        <dbReference type="ChEBI" id="CHEBI:60240"/>
    </ligand>
</feature>
<feature type="binding site" evidence="1">
    <location>
        <position position="12"/>
    </location>
    <ligand>
        <name>a divalent metal cation</name>
        <dbReference type="ChEBI" id="CHEBI:60240"/>
    </ligand>
</feature>
<feature type="binding site" evidence="1">
    <location>
        <begin position="36"/>
        <end position="37"/>
    </location>
    <ligand>
        <name>4-CDP-2-C-methyl-D-erythritol 2-phosphate</name>
        <dbReference type="ChEBI" id="CHEBI:57919"/>
    </ligand>
</feature>
<feature type="binding site" evidence="1">
    <location>
        <position position="44"/>
    </location>
    <ligand>
        <name>a divalent metal cation</name>
        <dbReference type="ChEBI" id="CHEBI:60240"/>
    </ligand>
</feature>
<feature type="binding site" evidence="1">
    <location>
        <begin position="58"/>
        <end position="60"/>
    </location>
    <ligand>
        <name>4-CDP-2-C-methyl-D-erythritol 2-phosphate</name>
        <dbReference type="ChEBI" id="CHEBI:57919"/>
    </ligand>
</feature>
<feature type="binding site" evidence="1">
    <location>
        <begin position="63"/>
        <end position="67"/>
    </location>
    <ligand>
        <name>4-CDP-2-C-methyl-D-erythritol 2-phosphate</name>
        <dbReference type="ChEBI" id="CHEBI:57919"/>
    </ligand>
</feature>
<feature type="binding site" evidence="1">
    <location>
        <begin position="102"/>
        <end position="108"/>
    </location>
    <ligand>
        <name>4-CDP-2-C-methyl-D-erythritol 2-phosphate</name>
        <dbReference type="ChEBI" id="CHEBI:57919"/>
    </ligand>
</feature>
<feature type="binding site" evidence="1">
    <location>
        <begin position="134"/>
        <end position="137"/>
    </location>
    <ligand>
        <name>4-CDP-2-C-methyl-D-erythritol 2-phosphate</name>
        <dbReference type="ChEBI" id="CHEBI:57919"/>
    </ligand>
</feature>
<feature type="binding site" evidence="1">
    <location>
        <position position="141"/>
    </location>
    <ligand>
        <name>4-CDP-2-C-methyl-D-erythritol 2-phosphate</name>
        <dbReference type="ChEBI" id="CHEBI:57919"/>
    </ligand>
</feature>
<feature type="binding site" evidence="1">
    <location>
        <position position="144"/>
    </location>
    <ligand>
        <name>4-CDP-2-C-methyl-D-erythritol 2-phosphate</name>
        <dbReference type="ChEBI" id="CHEBI:57919"/>
    </ligand>
</feature>
<feature type="site" description="Transition state stabilizer" evidence="1">
    <location>
        <position position="36"/>
    </location>
</feature>
<feature type="site" description="Transition state stabilizer" evidence="1">
    <location>
        <position position="135"/>
    </location>
</feature>
<evidence type="ECO:0000255" key="1">
    <source>
        <dbReference type="HAMAP-Rule" id="MF_00107"/>
    </source>
</evidence>
<protein>
    <recommendedName>
        <fullName evidence="1">2-C-methyl-D-erythritol 2,4-cyclodiphosphate synthase</fullName>
        <shortName evidence="1">MECDP-synthase</shortName>
        <shortName evidence="1">MECPP-synthase</shortName>
        <shortName evidence="1">MECPS</shortName>
        <ecNumber evidence="1">4.6.1.12</ecNumber>
    </recommendedName>
</protein>
<proteinExistence type="inferred from homology"/>
<accession>Q086A7</accession>
<comment type="function">
    <text evidence="1">Involved in the biosynthesis of isopentenyl diphosphate (IPP) and dimethylallyl diphosphate (DMAPP), two major building blocks of isoprenoid compounds. Catalyzes the conversion of 4-diphosphocytidyl-2-C-methyl-D-erythritol 2-phosphate (CDP-ME2P) to 2-C-methyl-D-erythritol 2,4-cyclodiphosphate (ME-CPP) with a corresponding release of cytidine 5-monophosphate (CMP).</text>
</comment>
<comment type="catalytic activity">
    <reaction evidence="1">
        <text>4-CDP-2-C-methyl-D-erythritol 2-phosphate = 2-C-methyl-D-erythritol 2,4-cyclic diphosphate + CMP</text>
        <dbReference type="Rhea" id="RHEA:23864"/>
        <dbReference type="ChEBI" id="CHEBI:57919"/>
        <dbReference type="ChEBI" id="CHEBI:58483"/>
        <dbReference type="ChEBI" id="CHEBI:60377"/>
        <dbReference type="EC" id="4.6.1.12"/>
    </reaction>
</comment>
<comment type="cofactor">
    <cofactor evidence="1">
        <name>a divalent metal cation</name>
        <dbReference type="ChEBI" id="CHEBI:60240"/>
    </cofactor>
    <text evidence="1">Binds 1 divalent metal cation per subunit.</text>
</comment>
<comment type="pathway">
    <text evidence="1">Isoprenoid biosynthesis; isopentenyl diphosphate biosynthesis via DXP pathway; isopentenyl diphosphate from 1-deoxy-D-xylulose 5-phosphate: step 4/6.</text>
</comment>
<comment type="subunit">
    <text evidence="1">Homotrimer.</text>
</comment>
<comment type="similarity">
    <text evidence="1">Belongs to the IspF family.</text>
</comment>
<gene>
    <name evidence="1" type="primary">ispF</name>
    <name type="ordered locus">Sfri_1055</name>
</gene>
<reference key="1">
    <citation type="submission" date="2006-08" db="EMBL/GenBank/DDBJ databases">
        <title>Complete sequence of Shewanella frigidimarina NCIMB 400.</title>
        <authorList>
            <consortium name="US DOE Joint Genome Institute"/>
            <person name="Copeland A."/>
            <person name="Lucas S."/>
            <person name="Lapidus A."/>
            <person name="Barry K."/>
            <person name="Detter J.C."/>
            <person name="Glavina del Rio T."/>
            <person name="Hammon N."/>
            <person name="Israni S."/>
            <person name="Dalin E."/>
            <person name="Tice H."/>
            <person name="Pitluck S."/>
            <person name="Fredrickson J.K."/>
            <person name="Kolker E."/>
            <person name="McCuel L.A."/>
            <person name="DiChristina T."/>
            <person name="Nealson K.H."/>
            <person name="Newman D."/>
            <person name="Tiedje J.M."/>
            <person name="Zhou J."/>
            <person name="Romine M.F."/>
            <person name="Culley D.E."/>
            <person name="Serres M."/>
            <person name="Chertkov O."/>
            <person name="Brettin T."/>
            <person name="Bruce D."/>
            <person name="Han C."/>
            <person name="Tapia R."/>
            <person name="Gilna P."/>
            <person name="Schmutz J."/>
            <person name="Larimer F."/>
            <person name="Land M."/>
            <person name="Hauser L."/>
            <person name="Kyrpides N."/>
            <person name="Mikhailova N."/>
            <person name="Richardson P."/>
        </authorList>
    </citation>
    <scope>NUCLEOTIDE SEQUENCE [LARGE SCALE GENOMIC DNA]</scope>
    <source>
        <strain>NCIMB 400</strain>
    </source>
</reference>
<name>ISPF_SHEFN</name>